<sequence>MATQKQEKSVIWDWLTTVDHKKIAIMYLIAGTLFFVKAGVMALFMRIQLMYPEMNFLSGQTFNEFITMHGTIMLFLAATPLLFAFMNYVIPLQIGARDVAFPFVNALGFWIFFFGGLLLSLSWFFGGGPDAGWTAYVPLSSRDYGGLGIDFYVLGLQVSGIGTLISAINFLVTIVNMRAPGMTMMRLPLFVWTSFISSTLILFAFTPLAAGLALLMLDRLFEAQYFIPSMGGNVVLWQHIFWIFGHPEVYILVLPAFGIISEVIPAFSRKRLFGYTAMVFATMIIAFLGFMVWAHHMFTVGMGPVANSIFAVATMTIAVPTGIKIFNWLFTMWGGKITFNTAMLFASSFVPTFVLGGVTGVMLAMAPVDYLYHDTYFVVAHFHYIIVGGIVLSLFAGLFYWYPKMFGHMLNETLGKLFFWVFYIGFHLTFFVQHLLGLMGMPRRVYTYLGDQGLDAFNFISTIGTFFMSAGVILLVINVIYSAFKGERVTVADPWDARTLEWATPTPVPEYNFAQTPQVRSLDPLFYEKIHGDGTMKPAEPVTDIHMPNGSILPFIMSIGLFFAGFGLIMLNMDNPIINPWIVAIGGLALTFGCMFVRSIKEDHGYHIPAEQVKADLAELKKGGN</sequence>
<accession>Q04440</accession>
<accession>D3FU49</accession>
<gene>
    <name type="primary">ctaD</name>
    <name type="ordered locus">BpOF4_00910</name>
</gene>
<reference key="1">
    <citation type="journal article" date="1993" name="J. Biol. Chem.">
        <title>Cloning of the cta operon from alkaliphilic Bacillus firmus OF4 and characterization of the pH-regulated cytochrome caa3 oxidase it encodes.</title>
        <authorList>
            <person name="Quirk P.G."/>
            <person name="Hicks D.B."/>
            <person name="Krulwich T.A."/>
        </authorList>
    </citation>
    <scope>NUCLEOTIDE SEQUENCE [GENOMIC DNA]</scope>
    <scope>PROTEIN SEQUENCE OF 2-13</scope>
</reference>
<reference key="2">
    <citation type="journal article" date="2011" name="Environ. Microbiol.">
        <title>Genome of alkaliphilic Bacillus pseudofirmus OF4 reveals adaptations that support the ability to grow in an external pH range from 7.5 to 11.4.</title>
        <authorList>
            <person name="Janto B."/>
            <person name="Ahmed A."/>
            <person name="Ito M."/>
            <person name="Liu J."/>
            <person name="Hicks D.B."/>
            <person name="Pagni S."/>
            <person name="Fackelmayer O.J."/>
            <person name="Smith T.A."/>
            <person name="Earl J."/>
            <person name="Elbourne L.D."/>
            <person name="Hassan K."/>
            <person name="Paulsen I.T."/>
            <person name="Kolsto A.B."/>
            <person name="Tourasse N.J."/>
            <person name="Ehrlich G.D."/>
            <person name="Boissy R."/>
            <person name="Ivey D.M."/>
            <person name="Li G."/>
            <person name="Xue Y."/>
            <person name="Ma Y."/>
            <person name="Hu F.Z."/>
            <person name="Krulwich T.A."/>
        </authorList>
    </citation>
    <scope>NUCLEOTIDE SEQUENCE [LARGE SCALE GENOMIC DNA]</scope>
    <source>
        <strain>ATCC BAA-2126 / JCM 17055 / OF4</strain>
    </source>
</reference>
<proteinExistence type="evidence at protein level"/>
<protein>
    <recommendedName>
        <fullName>Cytochrome c oxidase subunit 1</fullName>
        <ecNumber>7.1.1.9</ecNumber>
    </recommendedName>
    <alternativeName>
        <fullName>Cytochrome aa3 subunit 1</fullName>
    </alternativeName>
    <alternativeName>
        <fullName>Cytochrome c oxidase polypeptide I</fullName>
    </alternativeName>
</protein>
<dbReference type="EC" id="7.1.1.9"/>
<dbReference type="EMBL" id="M94110">
    <property type="protein sequence ID" value="AAA22365.1"/>
    <property type="molecule type" value="Genomic_DNA"/>
</dbReference>
<dbReference type="EMBL" id="CP001878">
    <property type="protein sequence ID" value="ADC48251.1"/>
    <property type="molecule type" value="Genomic_DNA"/>
</dbReference>
<dbReference type="RefSeq" id="WP_012959533.1">
    <property type="nucleotide sequence ID" value="NC_013791.2"/>
</dbReference>
<dbReference type="SMR" id="Q04440"/>
<dbReference type="STRING" id="398511.BpOF4_00910"/>
<dbReference type="KEGG" id="bpf:BpOF4_00910"/>
<dbReference type="eggNOG" id="COG0843">
    <property type="taxonomic scope" value="Bacteria"/>
</dbReference>
<dbReference type="HOGENOM" id="CLU_011899_7_1_9"/>
<dbReference type="UniPathway" id="UPA00705"/>
<dbReference type="Proteomes" id="UP000001544">
    <property type="component" value="Chromosome"/>
</dbReference>
<dbReference type="GO" id="GO:0005886">
    <property type="term" value="C:plasma membrane"/>
    <property type="evidence" value="ECO:0007669"/>
    <property type="project" value="UniProtKB-SubCell"/>
</dbReference>
<dbReference type="GO" id="GO:0004129">
    <property type="term" value="F:cytochrome-c oxidase activity"/>
    <property type="evidence" value="ECO:0007669"/>
    <property type="project" value="UniProtKB-EC"/>
</dbReference>
<dbReference type="GO" id="GO:0020037">
    <property type="term" value="F:heme binding"/>
    <property type="evidence" value="ECO:0007669"/>
    <property type="project" value="InterPro"/>
</dbReference>
<dbReference type="GO" id="GO:0046872">
    <property type="term" value="F:metal ion binding"/>
    <property type="evidence" value="ECO:0007669"/>
    <property type="project" value="UniProtKB-KW"/>
</dbReference>
<dbReference type="GO" id="GO:0015990">
    <property type="term" value="P:electron transport coupled proton transport"/>
    <property type="evidence" value="ECO:0007669"/>
    <property type="project" value="InterPro"/>
</dbReference>
<dbReference type="GO" id="GO:0006119">
    <property type="term" value="P:oxidative phosphorylation"/>
    <property type="evidence" value="ECO:0007669"/>
    <property type="project" value="UniProtKB-UniPathway"/>
</dbReference>
<dbReference type="GO" id="GO:0022904">
    <property type="term" value="P:respiratory electron transport chain"/>
    <property type="evidence" value="ECO:0007669"/>
    <property type="project" value="TreeGrafter"/>
</dbReference>
<dbReference type="CDD" id="cd01662">
    <property type="entry name" value="Ubiquinol_Oxidase_I"/>
    <property type="match status" value="1"/>
</dbReference>
<dbReference type="FunFam" id="1.20.210.10:FF:000006">
    <property type="entry name" value="Cytochrome c oxidase subunit 1"/>
    <property type="match status" value="1"/>
</dbReference>
<dbReference type="Gene3D" id="1.10.287.70">
    <property type="match status" value="1"/>
</dbReference>
<dbReference type="Gene3D" id="1.20.210.10">
    <property type="entry name" value="Cytochrome c oxidase-like, subunit I domain"/>
    <property type="match status" value="1"/>
</dbReference>
<dbReference type="InterPro" id="IPR023616">
    <property type="entry name" value="Cyt_c_oxase-like_su1_dom"/>
</dbReference>
<dbReference type="InterPro" id="IPR036927">
    <property type="entry name" value="Cyt_c_oxase-like_su1_sf"/>
</dbReference>
<dbReference type="InterPro" id="IPR000883">
    <property type="entry name" value="Cyt_C_Oxase_1"/>
</dbReference>
<dbReference type="InterPro" id="IPR023615">
    <property type="entry name" value="Cyt_c_Oxase_su1_BS"/>
</dbReference>
<dbReference type="InterPro" id="IPR014241">
    <property type="entry name" value="Cyt_c_oxidase_su1_bac"/>
</dbReference>
<dbReference type="NCBIfam" id="TIGR02891">
    <property type="entry name" value="CtaD_CoxA"/>
    <property type="match status" value="1"/>
</dbReference>
<dbReference type="PANTHER" id="PTHR10422">
    <property type="entry name" value="CYTOCHROME C OXIDASE SUBUNIT 1"/>
    <property type="match status" value="1"/>
</dbReference>
<dbReference type="PANTHER" id="PTHR10422:SF44">
    <property type="entry name" value="CYTOCHROME C OXIDASE SUBUNIT 1"/>
    <property type="match status" value="1"/>
</dbReference>
<dbReference type="Pfam" id="PF00115">
    <property type="entry name" value="COX1"/>
    <property type="match status" value="1"/>
</dbReference>
<dbReference type="PRINTS" id="PR01165">
    <property type="entry name" value="CYCOXIDASEI"/>
</dbReference>
<dbReference type="SUPFAM" id="SSF81442">
    <property type="entry name" value="Cytochrome c oxidase subunit I-like"/>
    <property type="match status" value="1"/>
</dbReference>
<dbReference type="PROSITE" id="PS50855">
    <property type="entry name" value="COX1"/>
    <property type="match status" value="1"/>
</dbReference>
<dbReference type="PROSITE" id="PS00077">
    <property type="entry name" value="COX1_CUB"/>
    <property type="match status" value="1"/>
</dbReference>
<evidence type="ECO:0000250" key="1"/>
<evidence type="ECO:0000255" key="2"/>
<evidence type="ECO:0000269" key="3">
    <source>
    </source>
</evidence>
<evidence type="ECO:0000305" key="4"/>
<organism>
    <name type="scientific">Alkalihalophilus pseudofirmus (strain ATCC BAA-2126 / JCM 17055 / OF4)</name>
    <name type="common">Bacillus pseudofirmus</name>
    <dbReference type="NCBI Taxonomy" id="398511"/>
    <lineage>
        <taxon>Bacteria</taxon>
        <taxon>Bacillati</taxon>
        <taxon>Bacillota</taxon>
        <taxon>Bacilli</taxon>
        <taxon>Bacillales</taxon>
        <taxon>Bacillaceae</taxon>
        <taxon>Alkalihalophilus</taxon>
    </lineage>
</organism>
<feature type="initiator methionine" description="Removed" evidence="3">
    <location>
        <position position="1"/>
    </location>
</feature>
<feature type="chain" id="PRO_0000183434" description="Cytochrome c oxidase subunit 1">
    <location>
        <begin position="2"/>
        <end position="625"/>
    </location>
</feature>
<feature type="transmembrane region" description="Helical" evidence="2">
    <location>
        <begin position="23"/>
        <end position="43"/>
    </location>
</feature>
<feature type="transmembrane region" description="Helical" evidence="2">
    <location>
        <begin position="72"/>
        <end position="92"/>
    </location>
</feature>
<feature type="transmembrane region" description="Helical" evidence="2">
    <location>
        <begin position="99"/>
        <end position="119"/>
    </location>
</feature>
<feature type="transmembrane region" description="Helical" evidence="2">
    <location>
        <begin position="151"/>
        <end position="171"/>
    </location>
</feature>
<feature type="transmembrane region" description="Helical" evidence="2">
    <location>
        <begin position="195"/>
        <end position="215"/>
    </location>
</feature>
<feature type="transmembrane region" description="Helical" evidence="2">
    <location>
        <begin position="240"/>
        <end position="260"/>
    </location>
</feature>
<feature type="transmembrane region" description="Helical" evidence="2">
    <location>
        <begin position="272"/>
        <end position="292"/>
    </location>
</feature>
<feature type="transmembrane region" description="Helical" evidence="2">
    <location>
        <begin position="309"/>
        <end position="329"/>
    </location>
</feature>
<feature type="transmembrane region" description="Helical" evidence="2">
    <location>
        <begin position="343"/>
        <end position="363"/>
    </location>
</feature>
<feature type="transmembrane region" description="Helical" evidence="2">
    <location>
        <begin position="382"/>
        <end position="402"/>
    </location>
</feature>
<feature type="transmembrane region" description="Helical" evidence="2">
    <location>
        <begin position="417"/>
        <end position="437"/>
    </location>
</feature>
<feature type="transmembrane region" description="Helical" evidence="2">
    <location>
        <begin position="460"/>
        <end position="480"/>
    </location>
</feature>
<feature type="transmembrane region" description="Helical" evidence="2">
    <location>
        <begin position="551"/>
        <end position="571"/>
    </location>
</feature>
<feature type="transmembrane region" description="Helical" evidence="2">
    <location>
        <begin position="577"/>
        <end position="597"/>
    </location>
</feature>
<feature type="binding site" description="axial binding residue" evidence="4">
    <location>
        <position position="69"/>
    </location>
    <ligand>
        <name>Fe(II)-heme a</name>
        <dbReference type="ChEBI" id="CHEBI:61715"/>
    </ligand>
    <ligandPart>
        <name>Fe</name>
        <dbReference type="ChEBI" id="CHEBI:18248"/>
    </ligandPart>
</feature>
<feature type="binding site" evidence="4">
    <location>
        <position position="246"/>
    </location>
    <ligand>
        <name>Cu cation</name>
        <dbReference type="ChEBI" id="CHEBI:23378"/>
        <label>B</label>
    </ligand>
</feature>
<feature type="binding site" evidence="4">
    <location>
        <position position="250"/>
    </location>
    <ligand>
        <name>Cu cation</name>
        <dbReference type="ChEBI" id="CHEBI:23378"/>
        <label>B</label>
    </ligand>
</feature>
<feature type="binding site" evidence="4">
    <location>
        <position position="295"/>
    </location>
    <ligand>
        <name>Cu cation</name>
        <dbReference type="ChEBI" id="CHEBI:23378"/>
        <label>B</label>
    </ligand>
</feature>
<feature type="binding site" evidence="4">
    <location>
        <position position="296"/>
    </location>
    <ligand>
        <name>Cu cation</name>
        <dbReference type="ChEBI" id="CHEBI:23378"/>
        <label>B</label>
    </ligand>
</feature>
<feature type="binding site" description="axial binding residue" evidence="4">
    <location>
        <position position="381"/>
    </location>
    <ligand>
        <name>heme a3</name>
        <dbReference type="ChEBI" id="CHEBI:83282"/>
    </ligand>
    <ligandPart>
        <name>Fe</name>
        <dbReference type="ChEBI" id="CHEBI:18248"/>
    </ligandPart>
</feature>
<feature type="binding site" description="axial binding residue" evidence="4">
    <location>
        <position position="383"/>
    </location>
    <ligand>
        <name>Fe(II)-heme a</name>
        <dbReference type="ChEBI" id="CHEBI:61715"/>
    </ligand>
    <ligandPart>
        <name>Fe</name>
        <dbReference type="ChEBI" id="CHEBI:18248"/>
    </ligandPart>
</feature>
<feature type="cross-link" description="1'-histidyl-3'-tyrosine (His-Tyr)" evidence="1">
    <location>
        <begin position="246"/>
        <end position="250"/>
    </location>
</feature>
<feature type="sequence conflict" description="In Ref. 1; AAA22365." evidence="4" ref="1">
    <original>N</original>
    <variation>K</variation>
    <location>
        <position position="575"/>
    </location>
</feature>
<comment type="function">
    <text>Cytochrome c oxidase is the component of the respiratory chain that catalyzes the reduction of oxygen to water. Subunits 1-3 form the functional core of the enzyme complex. CO I is the catalytic subunit of the enzyme. Electrons originating in cytochrome c are transferred via the copper A center of subunit 2 and heme A of subunit 1 to the bimetallic center formed by heme A3 and copper B.</text>
</comment>
<comment type="catalytic activity">
    <reaction>
        <text>4 Fe(II)-[cytochrome c] + O2 + 8 H(+)(in) = 4 Fe(III)-[cytochrome c] + 2 H2O + 4 H(+)(out)</text>
        <dbReference type="Rhea" id="RHEA:11436"/>
        <dbReference type="Rhea" id="RHEA-COMP:10350"/>
        <dbReference type="Rhea" id="RHEA-COMP:14399"/>
        <dbReference type="ChEBI" id="CHEBI:15377"/>
        <dbReference type="ChEBI" id="CHEBI:15378"/>
        <dbReference type="ChEBI" id="CHEBI:15379"/>
        <dbReference type="ChEBI" id="CHEBI:29033"/>
        <dbReference type="ChEBI" id="CHEBI:29034"/>
        <dbReference type="EC" id="7.1.1.9"/>
    </reaction>
</comment>
<comment type="pathway">
    <text>Energy metabolism; oxidative phosphorylation.</text>
</comment>
<comment type="subcellular location">
    <subcellularLocation>
        <location>Cell membrane</location>
        <topology>Multi-pass membrane protein</topology>
    </subcellularLocation>
</comment>
<comment type="induction">
    <text>Elevated expression at high pH.</text>
</comment>
<comment type="similarity">
    <text evidence="4">Belongs to the heme-copper respiratory oxidase family.</text>
</comment>
<name>COX1_ALKPO</name>
<keyword id="KW-1003">Cell membrane</keyword>
<keyword id="KW-0186">Copper</keyword>
<keyword id="KW-0903">Direct protein sequencing</keyword>
<keyword id="KW-0249">Electron transport</keyword>
<keyword id="KW-0349">Heme</keyword>
<keyword id="KW-0408">Iron</keyword>
<keyword id="KW-0472">Membrane</keyword>
<keyword id="KW-0479">Metal-binding</keyword>
<keyword id="KW-1185">Reference proteome</keyword>
<keyword id="KW-0679">Respiratory chain</keyword>
<keyword id="KW-1278">Translocase</keyword>
<keyword id="KW-0812">Transmembrane</keyword>
<keyword id="KW-1133">Transmembrane helix</keyword>
<keyword id="KW-0813">Transport</keyword>